<gene>
    <name evidence="1" type="primary">fabZ</name>
    <name type="ordered locus">xcc-b100_2934</name>
</gene>
<comment type="function">
    <text evidence="1">Involved in unsaturated fatty acids biosynthesis. Catalyzes the dehydration of short chain beta-hydroxyacyl-ACPs and long chain saturated and unsaturated beta-hydroxyacyl-ACPs.</text>
</comment>
<comment type="catalytic activity">
    <reaction evidence="1">
        <text>a (3R)-hydroxyacyl-[ACP] = a (2E)-enoyl-[ACP] + H2O</text>
        <dbReference type="Rhea" id="RHEA:13097"/>
        <dbReference type="Rhea" id="RHEA-COMP:9925"/>
        <dbReference type="Rhea" id="RHEA-COMP:9945"/>
        <dbReference type="ChEBI" id="CHEBI:15377"/>
        <dbReference type="ChEBI" id="CHEBI:78784"/>
        <dbReference type="ChEBI" id="CHEBI:78827"/>
        <dbReference type="EC" id="4.2.1.59"/>
    </reaction>
</comment>
<comment type="subcellular location">
    <subcellularLocation>
        <location evidence="1">Cytoplasm</location>
    </subcellularLocation>
</comment>
<comment type="similarity">
    <text evidence="1">Belongs to the thioester dehydratase family. FabZ subfamily.</text>
</comment>
<evidence type="ECO:0000255" key="1">
    <source>
        <dbReference type="HAMAP-Rule" id="MF_00406"/>
    </source>
</evidence>
<proteinExistence type="inferred from homology"/>
<sequence>MSHPIYELPIDVNQIQTLIPHRYPFLLIDRVIELDLEAKRIVGQKNVTINEPFFQGHFPTRPVMPGVLIIEALAQAGGVMTQLGLGRDALSKLFYMVKVDNARFNKQVVPGDVLILEVQMKRLIRNMGCYYGEAKVNGEIVASAEVMCAGARE</sequence>
<keyword id="KW-0963">Cytoplasm</keyword>
<keyword id="KW-0441">Lipid A biosynthesis</keyword>
<keyword id="KW-0444">Lipid biosynthesis</keyword>
<keyword id="KW-0443">Lipid metabolism</keyword>
<keyword id="KW-0456">Lyase</keyword>
<accession>B0RW77</accession>
<name>FABZ_XANCB</name>
<feature type="chain" id="PRO_1000123677" description="3-hydroxyacyl-[acyl-carrier-protein] dehydratase FabZ">
    <location>
        <begin position="1"/>
        <end position="153"/>
    </location>
</feature>
<feature type="active site" evidence="1">
    <location>
        <position position="57"/>
    </location>
</feature>
<reference key="1">
    <citation type="journal article" date="2008" name="J. Biotechnol.">
        <title>The genome of Xanthomonas campestris pv. campestris B100 and its use for the reconstruction of metabolic pathways involved in xanthan biosynthesis.</title>
        <authorList>
            <person name="Vorhoelter F.-J."/>
            <person name="Schneiker S."/>
            <person name="Goesmann A."/>
            <person name="Krause L."/>
            <person name="Bekel T."/>
            <person name="Kaiser O."/>
            <person name="Linke B."/>
            <person name="Patschkowski T."/>
            <person name="Rueckert C."/>
            <person name="Schmid J."/>
            <person name="Sidhu V.K."/>
            <person name="Sieber V."/>
            <person name="Tauch A."/>
            <person name="Watt S.A."/>
            <person name="Weisshaar B."/>
            <person name="Becker A."/>
            <person name="Niehaus K."/>
            <person name="Puehler A."/>
        </authorList>
    </citation>
    <scope>NUCLEOTIDE SEQUENCE [LARGE SCALE GENOMIC DNA]</scope>
    <source>
        <strain>B100</strain>
    </source>
</reference>
<organism>
    <name type="scientific">Xanthomonas campestris pv. campestris (strain B100)</name>
    <dbReference type="NCBI Taxonomy" id="509169"/>
    <lineage>
        <taxon>Bacteria</taxon>
        <taxon>Pseudomonadati</taxon>
        <taxon>Pseudomonadota</taxon>
        <taxon>Gammaproteobacteria</taxon>
        <taxon>Lysobacterales</taxon>
        <taxon>Lysobacteraceae</taxon>
        <taxon>Xanthomonas</taxon>
    </lineage>
</organism>
<dbReference type="EC" id="4.2.1.59" evidence="1"/>
<dbReference type="EMBL" id="AM920689">
    <property type="protein sequence ID" value="CAP52295.1"/>
    <property type="molecule type" value="Genomic_DNA"/>
</dbReference>
<dbReference type="SMR" id="B0RW77"/>
<dbReference type="KEGG" id="xca:xcc-b100_2934"/>
<dbReference type="HOGENOM" id="CLU_078912_1_0_6"/>
<dbReference type="Proteomes" id="UP000001188">
    <property type="component" value="Chromosome"/>
</dbReference>
<dbReference type="GO" id="GO:0005737">
    <property type="term" value="C:cytoplasm"/>
    <property type="evidence" value="ECO:0007669"/>
    <property type="project" value="UniProtKB-SubCell"/>
</dbReference>
<dbReference type="GO" id="GO:0016020">
    <property type="term" value="C:membrane"/>
    <property type="evidence" value="ECO:0007669"/>
    <property type="project" value="GOC"/>
</dbReference>
<dbReference type="GO" id="GO:0019171">
    <property type="term" value="F:(3R)-hydroxyacyl-[acyl-carrier-protein] dehydratase activity"/>
    <property type="evidence" value="ECO:0007669"/>
    <property type="project" value="UniProtKB-EC"/>
</dbReference>
<dbReference type="GO" id="GO:0006633">
    <property type="term" value="P:fatty acid biosynthetic process"/>
    <property type="evidence" value="ECO:0007669"/>
    <property type="project" value="UniProtKB-UniRule"/>
</dbReference>
<dbReference type="GO" id="GO:0009245">
    <property type="term" value="P:lipid A biosynthetic process"/>
    <property type="evidence" value="ECO:0007669"/>
    <property type="project" value="UniProtKB-UniRule"/>
</dbReference>
<dbReference type="CDD" id="cd01288">
    <property type="entry name" value="FabZ"/>
    <property type="match status" value="1"/>
</dbReference>
<dbReference type="FunFam" id="3.10.129.10:FF:000001">
    <property type="entry name" value="3-hydroxyacyl-[acyl-carrier-protein] dehydratase FabZ"/>
    <property type="match status" value="1"/>
</dbReference>
<dbReference type="Gene3D" id="3.10.129.10">
    <property type="entry name" value="Hotdog Thioesterase"/>
    <property type="match status" value="1"/>
</dbReference>
<dbReference type="HAMAP" id="MF_00406">
    <property type="entry name" value="FabZ"/>
    <property type="match status" value="1"/>
</dbReference>
<dbReference type="InterPro" id="IPR013114">
    <property type="entry name" value="FabA_FabZ"/>
</dbReference>
<dbReference type="InterPro" id="IPR010084">
    <property type="entry name" value="FabZ"/>
</dbReference>
<dbReference type="InterPro" id="IPR029069">
    <property type="entry name" value="HotDog_dom_sf"/>
</dbReference>
<dbReference type="NCBIfam" id="TIGR01750">
    <property type="entry name" value="fabZ"/>
    <property type="match status" value="1"/>
</dbReference>
<dbReference type="NCBIfam" id="NF000582">
    <property type="entry name" value="PRK00006.1"/>
    <property type="match status" value="1"/>
</dbReference>
<dbReference type="PANTHER" id="PTHR30272">
    <property type="entry name" value="3-HYDROXYACYL-[ACYL-CARRIER-PROTEIN] DEHYDRATASE"/>
    <property type="match status" value="1"/>
</dbReference>
<dbReference type="PANTHER" id="PTHR30272:SF1">
    <property type="entry name" value="3-HYDROXYACYL-[ACYL-CARRIER-PROTEIN] DEHYDRATASE"/>
    <property type="match status" value="1"/>
</dbReference>
<dbReference type="Pfam" id="PF07977">
    <property type="entry name" value="FabA"/>
    <property type="match status" value="1"/>
</dbReference>
<dbReference type="SUPFAM" id="SSF54637">
    <property type="entry name" value="Thioesterase/thiol ester dehydrase-isomerase"/>
    <property type="match status" value="1"/>
</dbReference>
<protein>
    <recommendedName>
        <fullName evidence="1">3-hydroxyacyl-[acyl-carrier-protein] dehydratase FabZ</fullName>
        <ecNumber evidence="1">4.2.1.59</ecNumber>
    </recommendedName>
    <alternativeName>
        <fullName evidence="1">(3R)-hydroxymyristoyl-[acyl-carrier-protein] dehydratase</fullName>
        <shortName evidence="1">(3R)-hydroxymyristoyl-ACP dehydrase</shortName>
    </alternativeName>
    <alternativeName>
        <fullName evidence="1">Beta-hydroxyacyl-ACP dehydratase</fullName>
    </alternativeName>
</protein>